<reference key="1">
    <citation type="journal article" date="1998" name="Science">
        <title>Genome sequence of the nematode C. elegans: a platform for investigating biology.</title>
        <authorList>
            <consortium name="The C. elegans sequencing consortium"/>
        </authorList>
    </citation>
    <scope>NUCLEOTIDE SEQUENCE [LARGE SCALE GENOMIC DNA]</scope>
    <source>
        <strain>Bristol N2</strain>
    </source>
</reference>
<dbReference type="EC" id="3.6.5.2" evidence="1"/>
<dbReference type="EMBL" id="FO080446">
    <property type="protein sequence ID" value="CCD63776.1"/>
    <property type="molecule type" value="Genomic_DNA"/>
</dbReference>
<dbReference type="PIR" id="T25757">
    <property type="entry name" value="T25757"/>
</dbReference>
<dbReference type="SMR" id="Q94231"/>
<dbReference type="FunCoup" id="Q94231">
    <property type="interactions" value="102"/>
</dbReference>
<dbReference type="STRING" id="6239.F45E4.1.1"/>
<dbReference type="PaxDb" id="6239-F45E4.1"/>
<dbReference type="PeptideAtlas" id="Q94231"/>
<dbReference type="EnsemblMetazoa" id="F45E4.1.1">
    <property type="protein sequence ID" value="F45E4.1.1"/>
    <property type="gene ID" value="WBGene00000190"/>
</dbReference>
<dbReference type="KEGG" id="cel:CELE_F45E4.1"/>
<dbReference type="UCSC" id="C38D4.8">
    <property type="organism name" value="c. elegans"/>
</dbReference>
<dbReference type="AGR" id="WB:WBGene00000190"/>
<dbReference type="CTD" id="191609"/>
<dbReference type="WormBase" id="F45E4.1">
    <property type="protein sequence ID" value="CE10492"/>
    <property type="gene ID" value="WBGene00000190"/>
    <property type="gene designation" value="arf-1.1"/>
</dbReference>
<dbReference type="eggNOG" id="KOG0070">
    <property type="taxonomic scope" value="Eukaryota"/>
</dbReference>
<dbReference type="HOGENOM" id="CLU_040729_9_3_1"/>
<dbReference type="InParanoid" id="Q94231"/>
<dbReference type="OMA" id="IECRTLM"/>
<dbReference type="OrthoDB" id="2011769at2759"/>
<dbReference type="PhylomeDB" id="Q94231"/>
<dbReference type="Reactome" id="R-CEL-1660514">
    <property type="pathway name" value="Synthesis of PIPs at the Golgi membrane"/>
</dbReference>
<dbReference type="Reactome" id="R-CEL-199992">
    <property type="pathway name" value="trans-Golgi Network Vesicle Budding"/>
</dbReference>
<dbReference type="Reactome" id="R-CEL-432720">
    <property type="pathway name" value="Lysosome Vesicle Biogenesis"/>
</dbReference>
<dbReference type="Reactome" id="R-CEL-432722">
    <property type="pathway name" value="Golgi Associated Vesicle Biogenesis"/>
</dbReference>
<dbReference type="Reactome" id="R-CEL-6807878">
    <property type="pathway name" value="COPI-mediated anterograde transport"/>
</dbReference>
<dbReference type="Reactome" id="R-CEL-6811434">
    <property type="pathway name" value="COPI-dependent Golgi-to-ER retrograde traffic"/>
</dbReference>
<dbReference type="PRO" id="PR:Q94231"/>
<dbReference type="Proteomes" id="UP000001940">
    <property type="component" value="Chromosome IV"/>
</dbReference>
<dbReference type="Bgee" id="WBGene00000190">
    <property type="expression patterns" value="Expressed in pharyngeal muscle cell (C elegans) and 2 other cell types or tissues"/>
</dbReference>
<dbReference type="GO" id="GO:0005737">
    <property type="term" value="C:cytoplasm"/>
    <property type="evidence" value="ECO:0000318"/>
    <property type="project" value="GO_Central"/>
</dbReference>
<dbReference type="GO" id="GO:0000139">
    <property type="term" value="C:Golgi membrane"/>
    <property type="evidence" value="ECO:0007669"/>
    <property type="project" value="UniProtKB-SubCell"/>
</dbReference>
<dbReference type="GO" id="GO:0005525">
    <property type="term" value="F:GTP binding"/>
    <property type="evidence" value="ECO:0000318"/>
    <property type="project" value="GO_Central"/>
</dbReference>
<dbReference type="GO" id="GO:0003924">
    <property type="term" value="F:GTPase activity"/>
    <property type="evidence" value="ECO:0007669"/>
    <property type="project" value="InterPro"/>
</dbReference>
<dbReference type="GO" id="GO:0030968">
    <property type="term" value="P:endoplasmic reticulum unfolded protein response"/>
    <property type="evidence" value="ECO:0007007"/>
    <property type="project" value="WormBase"/>
</dbReference>
<dbReference type="GO" id="GO:0006886">
    <property type="term" value="P:intracellular protein transport"/>
    <property type="evidence" value="ECO:0000318"/>
    <property type="project" value="GO_Central"/>
</dbReference>
<dbReference type="GO" id="GO:0036498">
    <property type="term" value="P:IRE1-mediated unfolded protein response"/>
    <property type="evidence" value="ECO:0007007"/>
    <property type="project" value="WormBase"/>
</dbReference>
<dbReference type="GO" id="GO:0016192">
    <property type="term" value="P:vesicle-mediated transport"/>
    <property type="evidence" value="ECO:0000318"/>
    <property type="project" value="GO_Central"/>
</dbReference>
<dbReference type="CDD" id="cd00878">
    <property type="entry name" value="Arf_Arl"/>
    <property type="match status" value="1"/>
</dbReference>
<dbReference type="FunFam" id="3.40.50.300:FF:000412">
    <property type="entry name" value="ADP-ribosylation factor 1"/>
    <property type="match status" value="1"/>
</dbReference>
<dbReference type="Gene3D" id="3.40.50.300">
    <property type="entry name" value="P-loop containing nucleotide triphosphate hydrolases"/>
    <property type="match status" value="1"/>
</dbReference>
<dbReference type="InterPro" id="IPR027417">
    <property type="entry name" value="P-loop_NTPase"/>
</dbReference>
<dbReference type="InterPro" id="IPR005225">
    <property type="entry name" value="Small_GTP-bd"/>
</dbReference>
<dbReference type="InterPro" id="IPR024156">
    <property type="entry name" value="Small_GTPase_ARF"/>
</dbReference>
<dbReference type="InterPro" id="IPR006689">
    <property type="entry name" value="Small_GTPase_ARF/SAR"/>
</dbReference>
<dbReference type="NCBIfam" id="TIGR00231">
    <property type="entry name" value="small_GTP"/>
    <property type="match status" value="1"/>
</dbReference>
<dbReference type="PANTHER" id="PTHR11711">
    <property type="entry name" value="ADP RIBOSYLATION FACTOR-RELATED"/>
    <property type="match status" value="1"/>
</dbReference>
<dbReference type="Pfam" id="PF00025">
    <property type="entry name" value="Arf"/>
    <property type="match status" value="1"/>
</dbReference>
<dbReference type="PRINTS" id="PR00328">
    <property type="entry name" value="SAR1GTPBP"/>
</dbReference>
<dbReference type="SMART" id="SM00177">
    <property type="entry name" value="ARF"/>
    <property type="match status" value="1"/>
</dbReference>
<dbReference type="SMART" id="SM00178">
    <property type="entry name" value="SAR"/>
    <property type="match status" value="1"/>
</dbReference>
<dbReference type="SUPFAM" id="SSF52540">
    <property type="entry name" value="P-loop containing nucleoside triphosphate hydrolases"/>
    <property type="match status" value="1"/>
</dbReference>
<dbReference type="PROSITE" id="PS51417">
    <property type="entry name" value="ARF"/>
    <property type="match status" value="1"/>
</dbReference>
<protein>
    <recommendedName>
        <fullName>ADP-ribosylation factor 1-like 1</fullName>
        <ecNumber evidence="1">3.6.5.2</ecNumber>
    </recommendedName>
    <alternativeName>
        <fullName>ADP-ribosylation factor-like protein 6</fullName>
    </alternativeName>
    <alternativeName>
        <fullName>ADP-ribosylation factor-related protein 1.1</fullName>
    </alternativeName>
</protein>
<feature type="initiator methionine" description="Removed" evidence="1">
    <location>
        <position position="1"/>
    </location>
</feature>
<feature type="chain" id="PRO_0000207409" description="ADP-ribosylation factor 1-like 1">
    <location>
        <begin position="2"/>
        <end position="179"/>
    </location>
</feature>
<feature type="region of interest" description="Important for the stable binding to the membranes" evidence="2">
    <location>
        <begin position="3"/>
        <end position="16"/>
    </location>
</feature>
<feature type="binding site" evidence="1">
    <location>
        <begin position="24"/>
        <end position="32"/>
    </location>
    <ligand>
        <name>GTP</name>
        <dbReference type="ChEBI" id="CHEBI:37565"/>
    </ligand>
</feature>
<feature type="binding site" evidence="1">
    <location>
        <begin position="126"/>
        <end position="129"/>
    </location>
    <ligand>
        <name>GTP</name>
        <dbReference type="ChEBI" id="CHEBI:37565"/>
    </ligand>
</feature>
<feature type="binding site" evidence="1">
    <location>
        <position position="160"/>
    </location>
    <ligand>
        <name>GTP</name>
        <dbReference type="ChEBI" id="CHEBI:37565"/>
    </ligand>
</feature>
<feature type="lipid moiety-binding region" description="N-myristoyl glycine" evidence="1">
    <location>
        <position position="2"/>
    </location>
</feature>
<evidence type="ECO:0000250" key="1">
    <source>
        <dbReference type="UniProtKB" id="P84077"/>
    </source>
</evidence>
<evidence type="ECO:0000250" key="2">
    <source>
        <dbReference type="UniProtKB" id="P84080"/>
    </source>
</evidence>
<evidence type="ECO:0000305" key="3"/>
<organism>
    <name type="scientific">Caenorhabditis elegans</name>
    <dbReference type="NCBI Taxonomy" id="6239"/>
    <lineage>
        <taxon>Eukaryota</taxon>
        <taxon>Metazoa</taxon>
        <taxon>Ecdysozoa</taxon>
        <taxon>Nematoda</taxon>
        <taxon>Chromadorea</taxon>
        <taxon>Rhabditida</taxon>
        <taxon>Rhabditina</taxon>
        <taxon>Rhabditomorpha</taxon>
        <taxon>Rhabditoidea</taxon>
        <taxon>Rhabditidae</taxon>
        <taxon>Peloderinae</taxon>
        <taxon>Caenorhabditis</taxon>
    </lineage>
</organism>
<proteinExistence type="inferred from homology"/>
<comment type="function">
    <text evidence="1">Small GTPase involved in protein trafficking between different compartments (By similarity). Modulates vesicle budding and uncoating within the Golgi complex (By similarity). In its GTP-bound form, triggers the recruitment of coatomer proteins to the Golgi membrane (By similarity). The hydrolysis of ARF1-bound GTP, which is mediated by ARFGAPs proteins, is required for dissociation of coat proteins from Golgi membranes and vesicles (By similarity).</text>
</comment>
<comment type="catalytic activity">
    <reaction evidence="1">
        <text>GTP + H2O = GDP + phosphate + H(+)</text>
        <dbReference type="Rhea" id="RHEA:19669"/>
        <dbReference type="ChEBI" id="CHEBI:15377"/>
        <dbReference type="ChEBI" id="CHEBI:15378"/>
        <dbReference type="ChEBI" id="CHEBI:37565"/>
        <dbReference type="ChEBI" id="CHEBI:43474"/>
        <dbReference type="ChEBI" id="CHEBI:58189"/>
        <dbReference type="EC" id="3.6.5.2"/>
    </reaction>
</comment>
<comment type="activity regulation">
    <text evidence="1">Alternates between an inactive GDP-bound form and an active GTP-bound form (By similarity). Activated by a guanine nucleotide-exchange factor (GEF) and inactivated by GTPase-activating protein (GAP) (By similarity).</text>
</comment>
<comment type="subcellular location">
    <subcellularLocation>
        <location evidence="1">Golgi apparatus membrane</location>
        <topology evidence="1">Lipid-anchor</topology>
        <orientation evidence="3">Cytoplasmic side</orientation>
    </subcellularLocation>
    <text evidence="2">In the GDP-bound form, associates transiently with the membranes via its myristoylated N-terminus where guanine nucleotide-exchange factor (GEF)-mediated nucleotide exchange occurs (By similarity). Following nucleotide exchange, the GTP-bound form undergoes a conformational change, leading to the exposure of a myristoylated N-terminal amphipathic helix that provides stable membrane anchorage (By similarity).</text>
</comment>
<comment type="similarity">
    <text evidence="3">Belongs to the small GTPase superfamily. Arf family.</text>
</comment>
<sequence>MGLFFSKISSFMFPNIECRTLMLGLDGAGKTTILYKLKLNETVNTIPTIGFNVETVTFQKITLTVWDVGGQKKIRALWKYYFPNTTTLVFVVDSSDIERIPEAKEELFSLLAEPELADSHLLVFANKQDMPNARSPAELTQLLDLGSLKNREWFICGTNAHSGQGLYEGLMWVKKQMKT</sequence>
<gene>
    <name type="primary">arf-1.1</name>
    <name type="synonym">arl-6</name>
    <name type="ORF">F45E4.1</name>
</gene>
<name>ARF11_CAEEL</name>
<accession>Q94231</accession>
<keyword id="KW-0931">ER-Golgi transport</keyword>
<keyword id="KW-0333">Golgi apparatus</keyword>
<keyword id="KW-0342">GTP-binding</keyword>
<keyword id="KW-0378">Hydrolase</keyword>
<keyword id="KW-0449">Lipoprotein</keyword>
<keyword id="KW-0472">Membrane</keyword>
<keyword id="KW-0519">Myristate</keyword>
<keyword id="KW-0547">Nucleotide-binding</keyword>
<keyword id="KW-0653">Protein transport</keyword>
<keyword id="KW-1185">Reference proteome</keyword>
<keyword id="KW-0813">Transport</keyword>